<gene>
    <name type="ordered locus">YPR077C</name>
    <name type="ORF">P9513.9B</name>
</gene>
<evidence type="ECO:0000255" key="1"/>
<evidence type="ECO:0000305" key="2"/>
<evidence type="ECO:0000305" key="3">
    <source>
    </source>
</evidence>
<feature type="chain" id="PRO_0000299821" description="Putative uncharacterized protein YPR077C">
    <location>
        <begin position="1"/>
        <end position="123"/>
    </location>
</feature>
<feature type="transmembrane region" description="Helical" evidence="1">
    <location>
        <begin position="14"/>
        <end position="34"/>
    </location>
</feature>
<proteinExistence type="uncertain"/>
<keyword id="KW-0472">Membrane</keyword>
<keyword id="KW-0812">Transmembrane</keyword>
<keyword id="KW-1133">Transmembrane helix</keyword>
<reference key="1">
    <citation type="journal article" date="1997" name="Nature">
        <title>The nucleotide sequence of Saccharomyces cerevisiae chromosome XVI.</title>
        <authorList>
            <person name="Bussey H."/>
            <person name="Storms R.K."/>
            <person name="Ahmed A."/>
            <person name="Albermann K."/>
            <person name="Allen E."/>
            <person name="Ansorge W."/>
            <person name="Araujo R."/>
            <person name="Aparicio A."/>
            <person name="Barrell B.G."/>
            <person name="Badcock K."/>
            <person name="Benes V."/>
            <person name="Botstein D."/>
            <person name="Bowman S."/>
            <person name="Brueckner M."/>
            <person name="Carpenter J."/>
            <person name="Cherry J.M."/>
            <person name="Chung E."/>
            <person name="Churcher C.M."/>
            <person name="Coster F."/>
            <person name="Davis K."/>
            <person name="Davis R.W."/>
            <person name="Dietrich F.S."/>
            <person name="Delius H."/>
            <person name="DiPaolo T."/>
            <person name="Dubois E."/>
            <person name="Duesterhoeft A."/>
            <person name="Duncan M."/>
            <person name="Floeth M."/>
            <person name="Fortin N."/>
            <person name="Friesen J.D."/>
            <person name="Fritz C."/>
            <person name="Goffeau A."/>
            <person name="Hall J."/>
            <person name="Hebling U."/>
            <person name="Heumann K."/>
            <person name="Hilbert H."/>
            <person name="Hillier L.W."/>
            <person name="Hunicke-Smith S."/>
            <person name="Hyman R.W."/>
            <person name="Johnston M."/>
            <person name="Kalman S."/>
            <person name="Kleine K."/>
            <person name="Komp C."/>
            <person name="Kurdi O."/>
            <person name="Lashkari D."/>
            <person name="Lew H."/>
            <person name="Lin A."/>
            <person name="Lin D."/>
            <person name="Louis E.J."/>
            <person name="Marathe R."/>
            <person name="Messenguy F."/>
            <person name="Mewes H.-W."/>
            <person name="Mirtipati S."/>
            <person name="Moestl D."/>
            <person name="Mueller-Auer S."/>
            <person name="Namath A."/>
            <person name="Nentwich U."/>
            <person name="Oefner P."/>
            <person name="Pearson D."/>
            <person name="Petel F.X."/>
            <person name="Pohl T.M."/>
            <person name="Purnelle B."/>
            <person name="Rajandream M.A."/>
            <person name="Rechmann S."/>
            <person name="Rieger M."/>
            <person name="Riles L."/>
            <person name="Roberts D."/>
            <person name="Schaefer M."/>
            <person name="Scharfe M."/>
            <person name="Scherens B."/>
            <person name="Schramm S."/>
            <person name="Schroeder M."/>
            <person name="Sdicu A.-M."/>
            <person name="Tettelin H."/>
            <person name="Urrestarazu L.A."/>
            <person name="Ushinsky S."/>
            <person name="Vierendeels F."/>
            <person name="Vissers S."/>
            <person name="Voss H."/>
            <person name="Walsh S.V."/>
            <person name="Wambutt R."/>
            <person name="Wang Y."/>
            <person name="Wedler E."/>
            <person name="Wedler H."/>
            <person name="Winnett E."/>
            <person name="Zhong W.-W."/>
            <person name="Zollner A."/>
            <person name="Vo D.H."/>
            <person name="Hani J."/>
        </authorList>
    </citation>
    <scope>NUCLEOTIDE SEQUENCE [LARGE SCALE GENOMIC DNA]</scope>
    <source>
        <strain>ATCC 204508 / S288c</strain>
    </source>
</reference>
<reference key="2">
    <citation type="journal article" date="2014" name="G3 (Bethesda)">
        <title>The reference genome sequence of Saccharomyces cerevisiae: Then and now.</title>
        <authorList>
            <person name="Engel S.R."/>
            <person name="Dietrich F.S."/>
            <person name="Fisk D.G."/>
            <person name="Binkley G."/>
            <person name="Balakrishnan R."/>
            <person name="Costanzo M.C."/>
            <person name="Dwight S.S."/>
            <person name="Hitz B.C."/>
            <person name="Karra K."/>
            <person name="Nash R.S."/>
            <person name="Weng S."/>
            <person name="Wong E.D."/>
            <person name="Lloyd P."/>
            <person name="Skrzypek M.S."/>
            <person name="Miyasato S.R."/>
            <person name="Simison M."/>
            <person name="Cherry J.M."/>
        </authorList>
    </citation>
    <scope>GENOME REANNOTATION</scope>
    <source>
        <strain>ATCC 204508 / S288c</strain>
    </source>
</reference>
<reference key="3">
    <citation type="journal article" date="2007" name="Genome Res.">
        <title>Approaching a complete repository of sequence-verified protein-encoding clones for Saccharomyces cerevisiae.</title>
        <authorList>
            <person name="Hu Y."/>
            <person name="Rolfs A."/>
            <person name="Bhullar B."/>
            <person name="Murthy T.V.S."/>
            <person name="Zhu C."/>
            <person name="Berger M.F."/>
            <person name="Camargo A.A."/>
            <person name="Kelley F."/>
            <person name="McCarron S."/>
            <person name="Jepson D."/>
            <person name="Richardson A."/>
            <person name="Raphael J."/>
            <person name="Moreira D."/>
            <person name="Taycher E."/>
            <person name="Zuo D."/>
            <person name="Mohr S."/>
            <person name="Kane M.F."/>
            <person name="Williamson J."/>
            <person name="Simpson A.J.G."/>
            <person name="Bulyk M.L."/>
            <person name="Harlow E."/>
            <person name="Marsischky G."/>
            <person name="Kolodner R.D."/>
            <person name="LaBaer J."/>
        </authorList>
    </citation>
    <scope>NUCLEOTIDE SEQUENCE [GENOMIC DNA]</scope>
    <source>
        <strain>ATCC 204508 / S288c</strain>
    </source>
</reference>
<organism>
    <name type="scientific">Saccharomyces cerevisiae (strain ATCC 204508 / S288c)</name>
    <name type="common">Baker's yeast</name>
    <dbReference type="NCBI Taxonomy" id="559292"/>
    <lineage>
        <taxon>Eukaryota</taxon>
        <taxon>Fungi</taxon>
        <taxon>Dikarya</taxon>
        <taxon>Ascomycota</taxon>
        <taxon>Saccharomycotina</taxon>
        <taxon>Saccharomycetes</taxon>
        <taxon>Saccharomycetales</taxon>
        <taxon>Saccharomycetaceae</taxon>
        <taxon>Saccharomyces</taxon>
    </lineage>
</organism>
<sequence>MSGLLLICSALKRVVLKITAVVCSVFSIRVLILATKIKKTCHECGTHLEIIWEGKFIFCKEDSKNGLQSIKILRRANLVKMKTPLPFPYHHLIRERKHSWKLNSVLCPNQVISLWYKHNRVKG</sequence>
<comment type="subcellular location">
    <subcellularLocation>
        <location evidence="2">Membrane</location>
        <topology evidence="2">Single-pass membrane protein</topology>
    </subcellularLocation>
</comment>
<comment type="miscellaneous">
    <text evidence="2">Almost completely overlaps YPR078C.</text>
</comment>
<comment type="caution">
    <text evidence="3">Product of a dubious gene prediction unlikely to encode a functional protein. Because of that it is not part of the S.cerevisiae S288c complete/reference proteome set.</text>
</comment>
<protein>
    <recommendedName>
        <fullName>Putative uncharacterized protein YPR077C</fullName>
    </recommendedName>
</protein>
<name>YPR77_YEAST</name>
<accession>O13583</accession>
<dbReference type="EMBL" id="U51033">
    <property type="protein sequence ID" value="AAB68144.1"/>
    <property type="molecule type" value="Genomic_DNA"/>
</dbReference>
<dbReference type="EMBL" id="AY693280">
    <property type="protein sequence ID" value="AAT93299.1"/>
    <property type="molecule type" value="Genomic_DNA"/>
</dbReference>
<dbReference type="PIR" id="S70044">
    <property type="entry name" value="S70044"/>
</dbReference>
<dbReference type="DIP" id="DIP-2872N"/>
<dbReference type="IntAct" id="O13583">
    <property type="interactions" value="2"/>
</dbReference>
<dbReference type="MINT" id="O13583"/>
<dbReference type="PaxDb" id="4932-YPR077C"/>
<dbReference type="EnsemblFungi" id="YPR077C_mRNA">
    <property type="protein sequence ID" value="YPR077C"/>
    <property type="gene ID" value="YPR077C"/>
</dbReference>
<dbReference type="AGR" id="SGD:S000006281"/>
<dbReference type="SGD" id="S000006281">
    <property type="gene designation" value="YPR077C"/>
</dbReference>
<dbReference type="HOGENOM" id="CLU_2017010_0_0_1"/>
<dbReference type="GO" id="GO:0016020">
    <property type="term" value="C:membrane"/>
    <property type="evidence" value="ECO:0007669"/>
    <property type="project" value="UniProtKB-SubCell"/>
</dbReference>